<evidence type="ECO:0000250" key="1">
    <source>
        <dbReference type="UniProtKB" id="P06988"/>
    </source>
</evidence>
<evidence type="ECO:0000305" key="2"/>
<comment type="cofactor">
    <cofactor evidence="1">
        <name>Zn(2+)</name>
        <dbReference type="ChEBI" id="CHEBI:29105"/>
    </cofactor>
    <text evidence="1">Binds 1 zinc ion per subunit.</text>
</comment>
<comment type="similarity">
    <text evidence="2">Belongs to the histidinol dehydrogenase family.</text>
</comment>
<comment type="caution">
    <text evidence="2">The conserved zinc-binding site Asp residue in position 381 is replaced by an Asn.</text>
</comment>
<accession>Q930I4</accession>
<name>HISXH_RHIME</name>
<gene>
    <name type="ordered locus">RA0212</name>
    <name type="ORF">SMa0398</name>
</gene>
<feature type="chain" id="PRO_0000135833" description="Histidinol dehydrogenase homolog">
    <location>
        <begin position="1"/>
        <end position="456"/>
    </location>
</feature>
<feature type="active site" description="Proton acceptor" evidence="1">
    <location>
        <position position="347"/>
    </location>
</feature>
<feature type="active site" description="Proton acceptor" evidence="1">
    <location>
        <position position="348"/>
    </location>
</feature>
<feature type="binding site" evidence="1">
    <location>
        <position position="279"/>
    </location>
    <ligand>
        <name>Zn(2+)</name>
        <dbReference type="ChEBI" id="CHEBI:29105"/>
    </ligand>
</feature>
<feature type="binding site" evidence="1">
    <location>
        <position position="440"/>
    </location>
    <ligand>
        <name>Zn(2+)</name>
        <dbReference type="ChEBI" id="CHEBI:29105"/>
    </ligand>
</feature>
<dbReference type="EC" id="1.1.-.-" evidence="2"/>
<dbReference type="EMBL" id="AE006469">
    <property type="protein sequence ID" value="AAK64870.1"/>
    <property type="molecule type" value="Genomic_DNA"/>
</dbReference>
<dbReference type="PIR" id="D95288">
    <property type="entry name" value="D95288"/>
</dbReference>
<dbReference type="RefSeq" id="NP_435458.3">
    <property type="nucleotide sequence ID" value="NC_003037.1"/>
</dbReference>
<dbReference type="SMR" id="Q930I4"/>
<dbReference type="EnsemblBacteria" id="AAK64870">
    <property type="protein sequence ID" value="AAK64870"/>
    <property type="gene ID" value="SMa0398"/>
</dbReference>
<dbReference type="KEGG" id="sme:SMa0398"/>
<dbReference type="PATRIC" id="fig|266834.11.peg.220"/>
<dbReference type="HOGENOM" id="CLU_006732_3_0_5"/>
<dbReference type="OrthoDB" id="9805269at2"/>
<dbReference type="Proteomes" id="UP000001976">
    <property type="component" value="Plasmid pSymA"/>
</dbReference>
<dbReference type="GO" id="GO:0005829">
    <property type="term" value="C:cytosol"/>
    <property type="evidence" value="ECO:0007669"/>
    <property type="project" value="TreeGrafter"/>
</dbReference>
<dbReference type="GO" id="GO:0004399">
    <property type="term" value="F:histidinol dehydrogenase activity"/>
    <property type="evidence" value="ECO:0007669"/>
    <property type="project" value="InterPro"/>
</dbReference>
<dbReference type="GO" id="GO:0046872">
    <property type="term" value="F:metal ion binding"/>
    <property type="evidence" value="ECO:0007669"/>
    <property type="project" value="UniProtKB-KW"/>
</dbReference>
<dbReference type="GO" id="GO:0051287">
    <property type="term" value="F:NAD binding"/>
    <property type="evidence" value="ECO:0007669"/>
    <property type="project" value="InterPro"/>
</dbReference>
<dbReference type="GO" id="GO:0000105">
    <property type="term" value="P:L-histidine biosynthetic process"/>
    <property type="evidence" value="ECO:0007669"/>
    <property type="project" value="InterPro"/>
</dbReference>
<dbReference type="CDD" id="cd06572">
    <property type="entry name" value="Histidinol_dh"/>
    <property type="match status" value="1"/>
</dbReference>
<dbReference type="FunFam" id="3.40.50.1980:FF:000001">
    <property type="entry name" value="Histidinol dehydrogenase"/>
    <property type="match status" value="1"/>
</dbReference>
<dbReference type="Gene3D" id="3.40.50.1980">
    <property type="entry name" value="Nitrogenase molybdenum iron protein domain"/>
    <property type="match status" value="2"/>
</dbReference>
<dbReference type="InterPro" id="IPR016161">
    <property type="entry name" value="Ald_DH/histidinol_DH"/>
</dbReference>
<dbReference type="InterPro" id="IPR001692">
    <property type="entry name" value="Histidinol_DH_CS"/>
</dbReference>
<dbReference type="InterPro" id="IPR022695">
    <property type="entry name" value="Histidinol_DH_monofunct"/>
</dbReference>
<dbReference type="InterPro" id="IPR012131">
    <property type="entry name" value="Hstdl_DH"/>
</dbReference>
<dbReference type="NCBIfam" id="TIGR00069">
    <property type="entry name" value="hisD"/>
    <property type="match status" value="1"/>
</dbReference>
<dbReference type="PANTHER" id="PTHR21256:SF2">
    <property type="entry name" value="HISTIDINE BIOSYNTHESIS TRIFUNCTIONAL PROTEIN"/>
    <property type="match status" value="1"/>
</dbReference>
<dbReference type="PANTHER" id="PTHR21256">
    <property type="entry name" value="HISTIDINOL DEHYDROGENASE HDH"/>
    <property type="match status" value="1"/>
</dbReference>
<dbReference type="Pfam" id="PF00815">
    <property type="entry name" value="Histidinol_dh"/>
    <property type="match status" value="1"/>
</dbReference>
<dbReference type="PIRSF" id="PIRSF000099">
    <property type="entry name" value="Histidinol_dh"/>
    <property type="match status" value="1"/>
</dbReference>
<dbReference type="PRINTS" id="PR00083">
    <property type="entry name" value="HOLDHDRGNASE"/>
</dbReference>
<dbReference type="SUPFAM" id="SSF53720">
    <property type="entry name" value="ALDH-like"/>
    <property type="match status" value="1"/>
</dbReference>
<dbReference type="PROSITE" id="PS00611">
    <property type="entry name" value="HISOL_DEHYDROGENASE"/>
    <property type="match status" value="1"/>
</dbReference>
<geneLocation type="plasmid">
    <name>pSymA</name>
    <name>megaplasmid 1</name>
</geneLocation>
<keyword id="KW-0479">Metal-binding</keyword>
<keyword id="KW-0560">Oxidoreductase</keyword>
<keyword id="KW-0614">Plasmid</keyword>
<keyword id="KW-1185">Reference proteome</keyword>
<keyword id="KW-0862">Zinc</keyword>
<organism>
    <name type="scientific">Rhizobium meliloti (strain 1021)</name>
    <name type="common">Ensifer meliloti</name>
    <name type="synonym">Sinorhizobium meliloti</name>
    <dbReference type="NCBI Taxonomy" id="266834"/>
    <lineage>
        <taxon>Bacteria</taxon>
        <taxon>Pseudomonadati</taxon>
        <taxon>Pseudomonadota</taxon>
        <taxon>Alphaproteobacteria</taxon>
        <taxon>Hyphomicrobiales</taxon>
        <taxon>Rhizobiaceae</taxon>
        <taxon>Sinorhizobium/Ensifer group</taxon>
        <taxon>Sinorhizobium</taxon>
    </lineage>
</organism>
<sequence length="456" mass="48702">MTLRPQLARYKDKTMTSVSFYEYSKLNAEEKAALLRRSETDISGFIEKVAPILEAVRTEGDKALARFGRELDKADVTEANLKVTAAEFDAAFKLVDASVLESVQFGIDNIRKFHEEQKPEAMWLKEIRPGAFAGDRFTPIQSVALYVPRGKGSFPSVTMMTSVPAVVAGVPNLAIVTPPAPDGSVDAATLVAARLAGVETVYKAGGAQAVAAVAYGTETVKPALKIVGPGSPWVVAAKRSLSGVIDTGLPAGPSEVMILADDTVHGGLAALDLLIEAEHGPDSSAYLVTHSGRVAEEALAALPEHWARMTEQRTAFSKTVLSGKTGGIVLTSSIEESYEFVNAYAPEHLELLSEQPFIHLGHITEASEILMGTHTPVSIANFSLGPNAVLPTSRWARTFGPLSVTDFVKRSSIGYVTAPAYPEFARHSHNLAIYEGFSSHALAVSPVRDAYLKKGA</sequence>
<protein>
    <recommendedName>
        <fullName evidence="2">Histidinol dehydrogenase homolog</fullName>
        <ecNumber evidence="2">1.1.-.-</ecNumber>
    </recommendedName>
</protein>
<reference key="1">
    <citation type="journal article" date="2001" name="Proc. Natl. Acad. Sci. U.S.A.">
        <title>Nucleotide sequence and predicted functions of the entire Sinorhizobium meliloti pSymA megaplasmid.</title>
        <authorList>
            <person name="Barnett M.J."/>
            <person name="Fisher R.F."/>
            <person name="Jones T."/>
            <person name="Komp C."/>
            <person name="Abola A.P."/>
            <person name="Barloy-Hubler F."/>
            <person name="Bowser L."/>
            <person name="Capela D."/>
            <person name="Galibert F."/>
            <person name="Gouzy J."/>
            <person name="Gurjal M."/>
            <person name="Hong A."/>
            <person name="Huizar L."/>
            <person name="Hyman R.W."/>
            <person name="Kahn D."/>
            <person name="Kahn M.L."/>
            <person name="Kalman S."/>
            <person name="Keating D.H."/>
            <person name="Palm C."/>
            <person name="Peck M.C."/>
            <person name="Surzycki R."/>
            <person name="Wells D.H."/>
            <person name="Yeh K.-C."/>
            <person name="Davis R.W."/>
            <person name="Federspiel N.A."/>
            <person name="Long S.R."/>
        </authorList>
    </citation>
    <scope>NUCLEOTIDE SEQUENCE [LARGE SCALE GENOMIC DNA]</scope>
    <source>
        <strain>1021</strain>
    </source>
</reference>
<reference key="2">
    <citation type="journal article" date="2001" name="Science">
        <title>The composite genome of the legume symbiont Sinorhizobium meliloti.</title>
        <authorList>
            <person name="Galibert F."/>
            <person name="Finan T.M."/>
            <person name="Long S.R."/>
            <person name="Puehler A."/>
            <person name="Abola P."/>
            <person name="Ampe F."/>
            <person name="Barloy-Hubler F."/>
            <person name="Barnett M.J."/>
            <person name="Becker A."/>
            <person name="Boistard P."/>
            <person name="Bothe G."/>
            <person name="Boutry M."/>
            <person name="Bowser L."/>
            <person name="Buhrmester J."/>
            <person name="Cadieu E."/>
            <person name="Capela D."/>
            <person name="Chain P."/>
            <person name="Cowie A."/>
            <person name="Davis R.W."/>
            <person name="Dreano S."/>
            <person name="Federspiel N.A."/>
            <person name="Fisher R.F."/>
            <person name="Gloux S."/>
            <person name="Godrie T."/>
            <person name="Goffeau A."/>
            <person name="Golding B."/>
            <person name="Gouzy J."/>
            <person name="Gurjal M."/>
            <person name="Hernandez-Lucas I."/>
            <person name="Hong A."/>
            <person name="Huizar L."/>
            <person name="Hyman R.W."/>
            <person name="Jones T."/>
            <person name="Kahn D."/>
            <person name="Kahn M.L."/>
            <person name="Kalman S."/>
            <person name="Keating D.H."/>
            <person name="Kiss E."/>
            <person name="Komp C."/>
            <person name="Lelaure V."/>
            <person name="Masuy D."/>
            <person name="Palm C."/>
            <person name="Peck M.C."/>
            <person name="Pohl T.M."/>
            <person name="Portetelle D."/>
            <person name="Purnelle B."/>
            <person name="Ramsperger U."/>
            <person name="Surzycki R."/>
            <person name="Thebault P."/>
            <person name="Vandenbol M."/>
            <person name="Vorhoelter F.J."/>
            <person name="Weidner S."/>
            <person name="Wells D.H."/>
            <person name="Wong K."/>
            <person name="Yeh K.-C."/>
            <person name="Batut J."/>
        </authorList>
    </citation>
    <scope>NUCLEOTIDE SEQUENCE [LARGE SCALE GENOMIC DNA]</scope>
    <source>
        <strain>1021</strain>
    </source>
</reference>
<proteinExistence type="inferred from homology"/>